<reference key="1">
    <citation type="journal article" date="1987" name="Nucleic Acids Res.">
        <title>The nucleotide sequence of the gene coding for XP55, a major secreted protein from Streptomyces lividans.</title>
        <authorList>
            <person name="Burnett W.V."/>
            <person name="Henner J."/>
            <person name="Eckhardt T."/>
        </authorList>
    </citation>
    <scope>NUCLEOTIDE SEQUENCE [GENOMIC DNA]</scope>
    <source>
        <strain>66 / 1326</strain>
    </source>
</reference>
<comment type="function">
    <text>Required for transport of an unidentified substrate.</text>
</comment>
<comment type="subcellular location">
    <subcellularLocation>
        <location evidence="3">Cell membrane</location>
        <topology evidence="3">Lipid-anchor</topology>
    </subcellularLocation>
</comment>
<comment type="similarity">
    <text evidence="3">Belongs to the bacterial solute-binding protein 5 family.</text>
</comment>
<accession>P06109</accession>
<name>XP55_STRLI</name>
<gene>
    <name type="primary">xp55</name>
</gene>
<evidence type="ECO:0000255" key="1">
    <source>
        <dbReference type="PROSITE-ProRule" id="PRU00303"/>
    </source>
</evidence>
<evidence type="ECO:0000256" key="2">
    <source>
        <dbReference type="SAM" id="MobiDB-lite"/>
    </source>
</evidence>
<evidence type="ECO:0000305" key="3"/>
<keyword id="KW-1003">Cell membrane</keyword>
<keyword id="KW-0449">Lipoprotein</keyword>
<keyword id="KW-0472">Membrane</keyword>
<keyword id="KW-0564">Palmitate</keyword>
<keyword id="KW-0732">Signal</keyword>
<keyword id="KW-0813">Transport</keyword>
<dbReference type="EMBL" id="Y00142">
    <property type="protein sequence ID" value="CAA68337.1"/>
    <property type="molecule type" value="Genomic_DNA"/>
</dbReference>
<dbReference type="PIR" id="S07386">
    <property type="entry name" value="S07386"/>
</dbReference>
<dbReference type="SMR" id="P06109"/>
<dbReference type="GO" id="GO:0043190">
    <property type="term" value="C:ATP-binding cassette (ABC) transporter complex"/>
    <property type="evidence" value="ECO:0007669"/>
    <property type="project" value="InterPro"/>
</dbReference>
<dbReference type="GO" id="GO:0042597">
    <property type="term" value="C:periplasmic space"/>
    <property type="evidence" value="ECO:0007669"/>
    <property type="project" value="UniProtKB-ARBA"/>
</dbReference>
<dbReference type="GO" id="GO:1904680">
    <property type="term" value="F:peptide transmembrane transporter activity"/>
    <property type="evidence" value="ECO:0007669"/>
    <property type="project" value="TreeGrafter"/>
</dbReference>
<dbReference type="GO" id="GO:0015833">
    <property type="term" value="P:peptide transport"/>
    <property type="evidence" value="ECO:0007669"/>
    <property type="project" value="TreeGrafter"/>
</dbReference>
<dbReference type="CDD" id="cd08518">
    <property type="entry name" value="PBP2_NikA_DppA_OppA_like_19"/>
    <property type="match status" value="1"/>
</dbReference>
<dbReference type="Gene3D" id="3.90.76.10">
    <property type="entry name" value="Dipeptide-binding Protein, Domain 1"/>
    <property type="match status" value="1"/>
</dbReference>
<dbReference type="Gene3D" id="3.10.105.10">
    <property type="entry name" value="Dipeptide-binding Protein, Domain 3"/>
    <property type="match status" value="1"/>
</dbReference>
<dbReference type="Gene3D" id="3.40.190.10">
    <property type="entry name" value="Periplasmic binding protein-like II"/>
    <property type="match status" value="1"/>
</dbReference>
<dbReference type="InterPro" id="IPR030678">
    <property type="entry name" value="Peptide/Ni-bd"/>
</dbReference>
<dbReference type="InterPro" id="IPR039424">
    <property type="entry name" value="SBP_5"/>
</dbReference>
<dbReference type="InterPro" id="IPR023765">
    <property type="entry name" value="SBP_5_CS"/>
</dbReference>
<dbReference type="InterPro" id="IPR000914">
    <property type="entry name" value="SBP_5_dom"/>
</dbReference>
<dbReference type="PANTHER" id="PTHR30290:SF9">
    <property type="entry name" value="OLIGOPEPTIDE-BINDING PROTEIN APPA"/>
    <property type="match status" value="1"/>
</dbReference>
<dbReference type="PANTHER" id="PTHR30290">
    <property type="entry name" value="PERIPLASMIC BINDING COMPONENT OF ABC TRANSPORTER"/>
    <property type="match status" value="1"/>
</dbReference>
<dbReference type="Pfam" id="PF00496">
    <property type="entry name" value="SBP_bac_5"/>
    <property type="match status" value="1"/>
</dbReference>
<dbReference type="PIRSF" id="PIRSF002741">
    <property type="entry name" value="MppA"/>
    <property type="match status" value="1"/>
</dbReference>
<dbReference type="SUPFAM" id="SSF53850">
    <property type="entry name" value="Periplasmic binding protein-like II"/>
    <property type="match status" value="1"/>
</dbReference>
<dbReference type="PROSITE" id="PS51257">
    <property type="entry name" value="PROKAR_LIPOPROTEIN"/>
    <property type="match status" value="1"/>
</dbReference>
<dbReference type="PROSITE" id="PS01040">
    <property type="entry name" value="SBP_BACTERIAL_5"/>
    <property type="match status" value="1"/>
</dbReference>
<feature type="signal peptide" evidence="1">
    <location>
        <begin position="1"/>
        <end position="33"/>
    </location>
</feature>
<feature type="chain" id="PRO_0000031804" description="Protein XP55">
    <location>
        <begin position="34"/>
        <end position="542"/>
    </location>
</feature>
<feature type="region of interest" description="Disordered" evidence="2">
    <location>
        <begin position="519"/>
        <end position="542"/>
    </location>
</feature>
<feature type="lipid moiety-binding region" description="N-palmitoyl cysteine" evidence="3">
    <location>
        <position position="34"/>
    </location>
</feature>
<feature type="lipid moiety-binding region" description="S-diacylglycerol cysteine" evidence="3">
    <location>
        <position position="34"/>
    </location>
</feature>
<proteinExistence type="inferred from homology"/>
<sequence length="542" mass="58031">MTARRTRWTRRTDRSLPIRSAAAAVAFAAGATACSAPTGGGGDGGTEAAESVVIGVASEPDTLSPLLGYGKDGNSKIFDGLLARDTDLELKPALAAALPKVTDDGRTITFTLREGVNFSDGEPLTAGDVYTYRTVLDEKTNNTARSELDAVRERSARADGTVVFTLKYPYAPFAARTVLPIVPEHVAGKQDPNTGDFNTEPVGTGPYVLTGWSKGEKLGFRANPHYWGDKPAVKSFTMAVTADDNVRATRLRSGDLDGAVLPPNLAATFEKDDGRRTYRARSYDFRAVTLPSAGQVTGDRAIRRALDAAVDRQAMVDKILDGAGRPAYGPLPVDDPWYERGIERPRDLAAAGRILDEAGWKPGSGGIRARDGQRASFTLYYPSGDKVRQDHALAYASDAKKAGIEVKVEGATWEVIEPRMKTDAVLADLGSVGDPDFGLYTLLHSTLAGDGFNNMAHYANPAVDEALDAGRRSQDPKVRAAAYREIQKALVADPGYTFLTHIDHLYVLADRWDGLTTQLEGRTNTASPAGPGGTSRTGGRKK</sequence>
<protein>
    <recommendedName>
        <fullName>Protein XP55</fullName>
    </recommendedName>
</protein>
<organism>
    <name type="scientific">Streptomyces lividans</name>
    <dbReference type="NCBI Taxonomy" id="1916"/>
    <lineage>
        <taxon>Bacteria</taxon>
        <taxon>Bacillati</taxon>
        <taxon>Actinomycetota</taxon>
        <taxon>Actinomycetes</taxon>
        <taxon>Kitasatosporales</taxon>
        <taxon>Streptomycetaceae</taxon>
        <taxon>Streptomyces</taxon>
    </lineage>
</organism>